<name>RS11_SHIFL</name>
<organism>
    <name type="scientific">Shigella flexneri</name>
    <dbReference type="NCBI Taxonomy" id="623"/>
    <lineage>
        <taxon>Bacteria</taxon>
        <taxon>Pseudomonadati</taxon>
        <taxon>Pseudomonadota</taxon>
        <taxon>Gammaproteobacteria</taxon>
        <taxon>Enterobacterales</taxon>
        <taxon>Enterobacteriaceae</taxon>
        <taxon>Shigella</taxon>
    </lineage>
</organism>
<accession>P0A7S2</accession>
<accession>P02366</accession>
<feature type="initiator methionine" description="Removed" evidence="1">
    <location>
        <position position="1"/>
    </location>
</feature>
<feature type="chain" id="PRO_0000123216" description="Small ribosomal subunit protein uS11">
    <location>
        <begin position="2"/>
        <end position="129"/>
    </location>
</feature>
<feature type="modified residue" description="N-methylalanine" evidence="1">
    <location>
        <position position="2"/>
    </location>
</feature>
<proteinExistence type="inferred from homology"/>
<evidence type="ECO:0000250" key="1"/>
<evidence type="ECO:0000305" key="2"/>
<comment type="function">
    <text evidence="1">Located on the platform of the 30S subunit, it bridges several disparate RNA helices of the 16S rRNA. Forms part of the Shine-Dalgarno cleft in the 70S ribosome (By similarity).</text>
</comment>
<comment type="subunit">
    <text evidence="1">Part of the 30S ribosomal subunit. Interacts with proteins S7 and S18. Cross-links to IF-3 (By similarity).</text>
</comment>
<comment type="similarity">
    <text evidence="2">Belongs to the universal ribosomal protein uS11 family.</text>
</comment>
<dbReference type="EMBL" id="AE005674">
    <property type="protein sequence ID" value="AAN44792.1"/>
    <property type="molecule type" value="Genomic_DNA"/>
</dbReference>
<dbReference type="EMBL" id="AE014073">
    <property type="protein sequence ID" value="AAP19384.1"/>
    <property type="molecule type" value="Genomic_DNA"/>
</dbReference>
<dbReference type="RefSeq" id="NP_709085.1">
    <property type="nucleotide sequence ID" value="NC_004337.2"/>
</dbReference>
<dbReference type="RefSeq" id="WP_001029684.1">
    <property type="nucleotide sequence ID" value="NZ_WPGW01000088.1"/>
</dbReference>
<dbReference type="SMR" id="P0A7S2"/>
<dbReference type="STRING" id="198214.SF3329"/>
<dbReference type="PaxDb" id="198214-SF3329"/>
<dbReference type="GeneID" id="1027041"/>
<dbReference type="GeneID" id="93778690"/>
<dbReference type="KEGG" id="sfl:SF3329"/>
<dbReference type="KEGG" id="sfx:S4433"/>
<dbReference type="PATRIC" id="fig|198214.7.peg.3938"/>
<dbReference type="HOGENOM" id="CLU_072439_5_0_6"/>
<dbReference type="Proteomes" id="UP000001006">
    <property type="component" value="Chromosome"/>
</dbReference>
<dbReference type="Proteomes" id="UP000002673">
    <property type="component" value="Chromosome"/>
</dbReference>
<dbReference type="GO" id="GO:1990904">
    <property type="term" value="C:ribonucleoprotein complex"/>
    <property type="evidence" value="ECO:0007669"/>
    <property type="project" value="UniProtKB-KW"/>
</dbReference>
<dbReference type="GO" id="GO:0005840">
    <property type="term" value="C:ribosome"/>
    <property type="evidence" value="ECO:0007669"/>
    <property type="project" value="UniProtKB-KW"/>
</dbReference>
<dbReference type="GO" id="GO:0019843">
    <property type="term" value="F:rRNA binding"/>
    <property type="evidence" value="ECO:0007669"/>
    <property type="project" value="UniProtKB-UniRule"/>
</dbReference>
<dbReference type="GO" id="GO:0003735">
    <property type="term" value="F:structural constituent of ribosome"/>
    <property type="evidence" value="ECO:0007669"/>
    <property type="project" value="InterPro"/>
</dbReference>
<dbReference type="GO" id="GO:0006412">
    <property type="term" value="P:translation"/>
    <property type="evidence" value="ECO:0007669"/>
    <property type="project" value="UniProtKB-UniRule"/>
</dbReference>
<dbReference type="FunFam" id="3.30.420.80:FF:000001">
    <property type="entry name" value="30S ribosomal protein S11"/>
    <property type="match status" value="1"/>
</dbReference>
<dbReference type="Gene3D" id="3.30.420.80">
    <property type="entry name" value="Ribosomal protein S11"/>
    <property type="match status" value="1"/>
</dbReference>
<dbReference type="HAMAP" id="MF_01310">
    <property type="entry name" value="Ribosomal_uS11"/>
    <property type="match status" value="1"/>
</dbReference>
<dbReference type="InterPro" id="IPR001971">
    <property type="entry name" value="Ribosomal_uS11"/>
</dbReference>
<dbReference type="InterPro" id="IPR019981">
    <property type="entry name" value="Ribosomal_uS11_bac-type"/>
</dbReference>
<dbReference type="InterPro" id="IPR018102">
    <property type="entry name" value="Ribosomal_uS11_CS"/>
</dbReference>
<dbReference type="InterPro" id="IPR036967">
    <property type="entry name" value="Ribosomal_uS11_sf"/>
</dbReference>
<dbReference type="NCBIfam" id="NF003698">
    <property type="entry name" value="PRK05309.1"/>
    <property type="match status" value="1"/>
</dbReference>
<dbReference type="NCBIfam" id="TIGR03632">
    <property type="entry name" value="uS11_bact"/>
    <property type="match status" value="1"/>
</dbReference>
<dbReference type="PANTHER" id="PTHR11759">
    <property type="entry name" value="40S RIBOSOMAL PROTEIN S14/30S RIBOSOMAL PROTEIN S11"/>
    <property type="match status" value="1"/>
</dbReference>
<dbReference type="Pfam" id="PF00411">
    <property type="entry name" value="Ribosomal_S11"/>
    <property type="match status" value="1"/>
</dbReference>
<dbReference type="PIRSF" id="PIRSF002131">
    <property type="entry name" value="Ribosomal_S11"/>
    <property type="match status" value="1"/>
</dbReference>
<dbReference type="SUPFAM" id="SSF53137">
    <property type="entry name" value="Translational machinery components"/>
    <property type="match status" value="1"/>
</dbReference>
<dbReference type="PROSITE" id="PS00054">
    <property type="entry name" value="RIBOSOMAL_S11"/>
    <property type="match status" value="1"/>
</dbReference>
<reference key="1">
    <citation type="journal article" date="2002" name="Nucleic Acids Res.">
        <title>Genome sequence of Shigella flexneri 2a: insights into pathogenicity through comparison with genomes of Escherichia coli K12 and O157.</title>
        <authorList>
            <person name="Jin Q."/>
            <person name="Yuan Z."/>
            <person name="Xu J."/>
            <person name="Wang Y."/>
            <person name="Shen Y."/>
            <person name="Lu W."/>
            <person name="Wang J."/>
            <person name="Liu H."/>
            <person name="Yang J."/>
            <person name="Yang F."/>
            <person name="Zhang X."/>
            <person name="Zhang J."/>
            <person name="Yang G."/>
            <person name="Wu H."/>
            <person name="Qu D."/>
            <person name="Dong J."/>
            <person name="Sun L."/>
            <person name="Xue Y."/>
            <person name="Zhao A."/>
            <person name="Gao Y."/>
            <person name="Zhu J."/>
            <person name="Kan B."/>
            <person name="Ding K."/>
            <person name="Chen S."/>
            <person name="Cheng H."/>
            <person name="Yao Z."/>
            <person name="He B."/>
            <person name="Chen R."/>
            <person name="Ma D."/>
            <person name="Qiang B."/>
            <person name="Wen Y."/>
            <person name="Hou Y."/>
            <person name="Yu J."/>
        </authorList>
    </citation>
    <scope>NUCLEOTIDE SEQUENCE [LARGE SCALE GENOMIC DNA]</scope>
    <source>
        <strain>301 / Serotype 2a</strain>
    </source>
</reference>
<reference key="2">
    <citation type="journal article" date="2003" name="Infect. Immun.">
        <title>Complete genome sequence and comparative genomics of Shigella flexneri serotype 2a strain 2457T.</title>
        <authorList>
            <person name="Wei J."/>
            <person name="Goldberg M.B."/>
            <person name="Burland V."/>
            <person name="Venkatesan M.M."/>
            <person name="Deng W."/>
            <person name="Fournier G."/>
            <person name="Mayhew G.F."/>
            <person name="Plunkett G. III"/>
            <person name="Rose D.J."/>
            <person name="Darling A."/>
            <person name="Mau B."/>
            <person name="Perna N.T."/>
            <person name="Payne S.M."/>
            <person name="Runyen-Janecky L.J."/>
            <person name="Zhou S."/>
            <person name="Schwartz D.C."/>
            <person name="Blattner F.R."/>
        </authorList>
    </citation>
    <scope>NUCLEOTIDE SEQUENCE [LARGE SCALE GENOMIC DNA]</scope>
    <source>
        <strain>ATCC 700930 / 2457T / Serotype 2a</strain>
    </source>
</reference>
<keyword id="KW-0488">Methylation</keyword>
<keyword id="KW-1185">Reference proteome</keyword>
<keyword id="KW-0687">Ribonucleoprotein</keyword>
<keyword id="KW-0689">Ribosomal protein</keyword>
<keyword id="KW-0694">RNA-binding</keyword>
<keyword id="KW-0699">rRNA-binding</keyword>
<gene>
    <name type="primary">rpsK</name>
    <name type="ordered locus">SF3329</name>
    <name type="ordered locus">S4433</name>
</gene>
<protein>
    <recommendedName>
        <fullName evidence="2">Small ribosomal subunit protein uS11</fullName>
    </recommendedName>
    <alternativeName>
        <fullName>30S ribosomal protein S11</fullName>
    </alternativeName>
</protein>
<sequence length="129" mass="13845">MAKAPIRARKRVRKQVSDGVAHIHASFNNTIVTITDRQGNALGWATAGGSGFRGSRKSTPFAAQVAAERCADAVKEYGIKNLEVMVKGPGPGRESTIRALNAAGFRITNITDVTPIPHNGCRPPKKRRV</sequence>